<keyword id="KW-0965">Cell junction</keyword>
<keyword id="KW-1003">Cell membrane</keyword>
<keyword id="KW-0303">Gap junction</keyword>
<keyword id="KW-0472">Membrane</keyword>
<keyword id="KW-0597">Phosphoprotein</keyword>
<keyword id="KW-1185">Reference proteome</keyword>
<keyword id="KW-0812">Transmembrane</keyword>
<keyword id="KW-1133">Transmembrane helix</keyword>
<accession>Q01231</accession>
<proteinExistence type="evidence at transcript level"/>
<evidence type="ECO:0000250" key="1">
    <source>
        <dbReference type="UniProtKB" id="P28234"/>
    </source>
</evidence>
<evidence type="ECO:0000255" key="2"/>
<evidence type="ECO:0000256" key="3">
    <source>
        <dbReference type="SAM" id="MobiDB-lite"/>
    </source>
</evidence>
<evidence type="ECO:0000269" key="4">
    <source>
    </source>
</evidence>
<evidence type="ECO:0000269" key="5">
    <source>
    </source>
</evidence>
<evidence type="ECO:0000305" key="6"/>
<reference key="1">
    <citation type="journal article" date="1992" name="J. Cell Biol.">
        <title>Molecular cloning and functional expression of mouse connexin40, a second gap junction gene preferentially expressed in lung.</title>
        <authorList>
            <person name="Hennemann J."/>
            <person name="Suchyna T."/>
            <person name="Lichtenberg-Frate H."/>
            <person name="Jungbluth S."/>
            <person name="Dahl E."/>
            <person name="Schwarz J."/>
            <person name="Nicholson B.J."/>
            <person name="Willecke K."/>
        </authorList>
    </citation>
    <scope>NUCLEOTIDE SEQUENCE [GENOMIC DNA]</scope>
    <scope>TISSUE SPECIFICITY</scope>
    <scope>DEVELOPMENTAL STAGE</scope>
    <source>
        <strain>C57BL/6J</strain>
    </source>
</reference>
<reference key="2">
    <citation type="journal article" date="2004" name="Genome Res.">
        <title>The status, quality, and expansion of the NIH full-length cDNA project: the Mammalian Gene Collection (MGC).</title>
        <authorList>
            <consortium name="The MGC Project Team"/>
        </authorList>
    </citation>
    <scope>NUCLEOTIDE SEQUENCE [LARGE SCALE MRNA]</scope>
    <source>
        <strain>C57BL/6J</strain>
        <tissue>Brain</tissue>
    </source>
</reference>
<reference key="3">
    <citation type="journal article" date="2017" name="Circ. Res.">
        <title>Polydom Is an Extracellular Matrix Protein Involved in Lymphatic Vessel Remodeling.</title>
        <authorList>
            <person name="Morooka N."/>
            <person name="Futaki S."/>
            <person name="Sato-Nishiuchi R."/>
            <person name="Nishino M."/>
            <person name="Totani Y."/>
            <person name="Shimono C."/>
            <person name="Nakano I."/>
            <person name="Nakajima H."/>
            <person name="Mochizuki N."/>
            <person name="Sekiguchi K."/>
        </authorList>
    </citation>
    <scope>DEVELOPMENTAL STAGE</scope>
</reference>
<gene>
    <name type="primary">Gja5</name>
    <name type="synonym">Cxn-40</name>
</gene>
<organism>
    <name type="scientific">Mus musculus</name>
    <name type="common">Mouse</name>
    <dbReference type="NCBI Taxonomy" id="10090"/>
    <lineage>
        <taxon>Eukaryota</taxon>
        <taxon>Metazoa</taxon>
        <taxon>Chordata</taxon>
        <taxon>Craniata</taxon>
        <taxon>Vertebrata</taxon>
        <taxon>Euteleostomi</taxon>
        <taxon>Mammalia</taxon>
        <taxon>Eutheria</taxon>
        <taxon>Euarchontoglires</taxon>
        <taxon>Glires</taxon>
        <taxon>Rodentia</taxon>
        <taxon>Myomorpha</taxon>
        <taxon>Muroidea</taxon>
        <taxon>Muridae</taxon>
        <taxon>Murinae</taxon>
        <taxon>Mus</taxon>
        <taxon>Mus</taxon>
    </lineage>
</organism>
<feature type="chain" id="PRO_0000057820" description="Gap junction alpha-5 protein">
    <location>
        <begin position="1"/>
        <end position="358"/>
    </location>
</feature>
<feature type="topological domain" description="Cytoplasmic" evidence="2">
    <location>
        <begin position="1"/>
        <end position="19"/>
    </location>
</feature>
<feature type="transmembrane region" description="Helical" evidence="2">
    <location>
        <begin position="20"/>
        <end position="40"/>
    </location>
</feature>
<feature type="topological domain" description="Extracellular" evidence="2">
    <location>
        <begin position="41"/>
        <end position="76"/>
    </location>
</feature>
<feature type="transmembrane region" description="Helical" evidence="2">
    <location>
        <begin position="77"/>
        <end position="97"/>
    </location>
</feature>
<feature type="topological domain" description="Cytoplasmic" evidence="2">
    <location>
        <begin position="98"/>
        <end position="164"/>
    </location>
</feature>
<feature type="transmembrane region" description="Helical" evidence="2">
    <location>
        <begin position="165"/>
        <end position="185"/>
    </location>
</feature>
<feature type="topological domain" description="Extracellular" evidence="2">
    <location>
        <begin position="186"/>
        <end position="205"/>
    </location>
</feature>
<feature type="transmembrane region" description="Helical" evidence="2">
    <location>
        <begin position="206"/>
        <end position="226"/>
    </location>
</feature>
<feature type="topological domain" description="Cytoplasmic" evidence="2">
    <location>
        <begin position="227"/>
        <end position="358"/>
    </location>
</feature>
<feature type="region of interest" description="Disordered" evidence="3">
    <location>
        <begin position="242"/>
        <end position="262"/>
    </location>
</feature>
<feature type="region of interest" description="Disordered" evidence="3">
    <location>
        <begin position="318"/>
        <end position="358"/>
    </location>
</feature>
<feature type="modified residue" description="Phosphoserine" evidence="1">
    <location>
        <position position="353"/>
    </location>
</feature>
<feature type="modified residue" description="Phosphoserine" evidence="1">
    <location>
        <position position="357"/>
    </location>
</feature>
<comment type="function">
    <text>One gap junction consists of a cluster of closely packed pairs of transmembrane channels, the connexons, through which materials of low MW diffuse from one cell to a neighboring cell.</text>
</comment>
<comment type="subunit">
    <text>A connexon is composed of a hexamer of connexins.</text>
</comment>
<comment type="subcellular location">
    <subcellularLocation>
        <location evidence="6">Cell membrane</location>
        <topology evidence="2">Multi-pass membrane protein</topology>
    </subcellularLocation>
    <subcellularLocation>
        <location>Cell junction</location>
        <location>Gap junction</location>
    </subcellularLocation>
</comment>
<comment type="tissue specificity">
    <text evidence="4">Abundantly expressed in the lung, also expressed in the kidney and heart.</text>
</comment>
<comment type="developmental stage">
    <text evidence="4 5">Expressed in arteries of the heart at 16.5 dpc (PubMed:28179430). Expressed in embryonic brain, skin, liver and kidney (PubMed:1318884).</text>
</comment>
<comment type="similarity">
    <text evidence="6">Belongs to the connexin family. Alpha-type (group II) subfamily.</text>
</comment>
<dbReference type="EMBL" id="X61675">
    <property type="protein sequence ID" value="CAA43850.1"/>
    <property type="molecule type" value="Genomic_DNA"/>
</dbReference>
<dbReference type="EMBL" id="BC053054">
    <property type="protein sequence ID" value="AAH53054.1"/>
    <property type="molecule type" value="mRNA"/>
</dbReference>
<dbReference type="CCDS" id="CCDS17652.1"/>
<dbReference type="PIR" id="S23111">
    <property type="entry name" value="S23111"/>
</dbReference>
<dbReference type="RefSeq" id="NP_001258557.1">
    <property type="nucleotide sequence ID" value="NM_001271628.1"/>
</dbReference>
<dbReference type="RefSeq" id="NP_032147.1">
    <property type="nucleotide sequence ID" value="NM_008121.3"/>
</dbReference>
<dbReference type="SMR" id="Q01231"/>
<dbReference type="FunCoup" id="Q01231">
    <property type="interactions" value="51"/>
</dbReference>
<dbReference type="STRING" id="10090.ENSMUSP00000088264"/>
<dbReference type="GlyGen" id="Q01231">
    <property type="glycosylation" value="1 site, 1 O-linked glycan (1 site)"/>
</dbReference>
<dbReference type="iPTMnet" id="Q01231"/>
<dbReference type="PhosphoSitePlus" id="Q01231"/>
<dbReference type="PaxDb" id="10090-ENSMUSP00000088264"/>
<dbReference type="ProteomicsDB" id="284072"/>
<dbReference type="Antibodypedia" id="72405">
    <property type="antibodies" value="288 antibodies from 32 providers"/>
</dbReference>
<dbReference type="DNASU" id="14613"/>
<dbReference type="Ensembl" id="ENSMUST00000072600.7">
    <property type="protein sequence ID" value="ENSMUSP00000088264.6"/>
    <property type="gene ID" value="ENSMUSG00000057123.15"/>
</dbReference>
<dbReference type="GeneID" id="14613"/>
<dbReference type="KEGG" id="mmu:14613"/>
<dbReference type="UCSC" id="uc008qoo.2">
    <property type="organism name" value="mouse"/>
</dbReference>
<dbReference type="AGR" id="MGI:95716"/>
<dbReference type="CTD" id="2702"/>
<dbReference type="MGI" id="MGI:95716">
    <property type="gene designation" value="Gja5"/>
</dbReference>
<dbReference type="VEuPathDB" id="HostDB:ENSMUSG00000057123"/>
<dbReference type="eggNOG" id="ENOG502QW11">
    <property type="taxonomic scope" value="Eukaryota"/>
</dbReference>
<dbReference type="GeneTree" id="ENSGT01050000244864"/>
<dbReference type="HOGENOM" id="CLU_037388_0_0_1"/>
<dbReference type="InParanoid" id="Q01231"/>
<dbReference type="OMA" id="FIHIHYG"/>
<dbReference type="OrthoDB" id="12134at9989"/>
<dbReference type="PhylomeDB" id="Q01231"/>
<dbReference type="TreeFam" id="TF329606"/>
<dbReference type="Reactome" id="R-MMU-190861">
    <property type="pathway name" value="Gap junction assembly"/>
</dbReference>
<dbReference type="BioGRID-ORCS" id="14613">
    <property type="hits" value="4 hits in 77 CRISPR screens"/>
</dbReference>
<dbReference type="ChiTaRS" id="Gja5">
    <property type="organism name" value="mouse"/>
</dbReference>
<dbReference type="PRO" id="PR:Q01231"/>
<dbReference type="Proteomes" id="UP000000589">
    <property type="component" value="Chromosome 3"/>
</dbReference>
<dbReference type="RNAct" id="Q01231">
    <property type="molecule type" value="protein"/>
</dbReference>
<dbReference type="Bgee" id="ENSMUSG00000057123">
    <property type="expression patterns" value="Expressed in intersomitic artery and 98 other cell types or tissues"/>
</dbReference>
<dbReference type="ExpressionAtlas" id="Q01231">
    <property type="expression patterns" value="baseline and differential"/>
</dbReference>
<dbReference type="GO" id="GO:0042995">
    <property type="term" value="C:cell projection"/>
    <property type="evidence" value="ECO:0007669"/>
    <property type="project" value="Ensembl"/>
</dbReference>
<dbReference type="GO" id="GO:0005922">
    <property type="term" value="C:connexin complex"/>
    <property type="evidence" value="ECO:0007669"/>
    <property type="project" value="Ensembl"/>
</dbReference>
<dbReference type="GO" id="GO:0005921">
    <property type="term" value="C:gap junction"/>
    <property type="evidence" value="ECO:0000314"/>
    <property type="project" value="MGI"/>
</dbReference>
<dbReference type="GO" id="GO:0014704">
    <property type="term" value="C:intercalated disc"/>
    <property type="evidence" value="ECO:0007669"/>
    <property type="project" value="Ensembl"/>
</dbReference>
<dbReference type="GO" id="GO:0071253">
    <property type="term" value="F:connexin binding"/>
    <property type="evidence" value="ECO:0007669"/>
    <property type="project" value="Ensembl"/>
</dbReference>
<dbReference type="GO" id="GO:0097718">
    <property type="term" value="F:disordered domain specific binding"/>
    <property type="evidence" value="ECO:0007669"/>
    <property type="project" value="Ensembl"/>
</dbReference>
<dbReference type="GO" id="GO:0086076">
    <property type="term" value="F:gap junction channel activity involved in atrial cardiac muscle cell-AV node cell electrical coupling"/>
    <property type="evidence" value="ECO:0007669"/>
    <property type="project" value="Ensembl"/>
</dbReference>
<dbReference type="GO" id="GO:0086077">
    <property type="term" value="F:gap junction channel activity involved in AV node cell-bundle of His cell electrical coupling"/>
    <property type="evidence" value="ECO:0007669"/>
    <property type="project" value="Ensembl"/>
</dbReference>
<dbReference type="GO" id="GO:0086078">
    <property type="term" value="F:gap junction channel activity involved in bundle of His cell-Purkinje myocyte electrical coupling"/>
    <property type="evidence" value="ECO:0000315"/>
    <property type="project" value="BHF-UCL"/>
</dbReference>
<dbReference type="GO" id="GO:0055077">
    <property type="term" value="F:gap junction hemi-channel activity"/>
    <property type="evidence" value="ECO:0007669"/>
    <property type="project" value="Ensembl"/>
</dbReference>
<dbReference type="GO" id="GO:0001525">
    <property type="term" value="P:angiogenesis"/>
    <property type="evidence" value="ECO:0007669"/>
    <property type="project" value="Ensembl"/>
</dbReference>
<dbReference type="GO" id="GO:0048844">
    <property type="term" value="P:artery morphogenesis"/>
    <property type="evidence" value="ECO:0000315"/>
    <property type="project" value="BHF-UCL"/>
</dbReference>
<dbReference type="GO" id="GO:0086044">
    <property type="term" value="P:atrial cardiac muscle cell to AV node cell communication by electrical coupling"/>
    <property type="evidence" value="ECO:0000315"/>
    <property type="project" value="BHF-UCL"/>
</dbReference>
<dbReference type="GO" id="GO:0060413">
    <property type="term" value="P:atrial septum morphogenesis"/>
    <property type="evidence" value="ECO:0000315"/>
    <property type="project" value="MGI"/>
</dbReference>
<dbReference type="GO" id="GO:0003294">
    <property type="term" value="P:atrial ventricular junction remodeling"/>
    <property type="evidence" value="ECO:0000315"/>
    <property type="project" value="MGI"/>
</dbReference>
<dbReference type="GO" id="GO:0086067">
    <property type="term" value="P:AV node cell to bundle of His cell communication"/>
    <property type="evidence" value="ECO:0000315"/>
    <property type="project" value="MGI"/>
</dbReference>
<dbReference type="GO" id="GO:0086053">
    <property type="term" value="P:AV node cell to bundle of His cell communication by electrical coupling"/>
    <property type="evidence" value="ECO:0000315"/>
    <property type="project" value="BHF-UCL"/>
</dbReference>
<dbReference type="GO" id="GO:0001568">
    <property type="term" value="P:blood vessel development"/>
    <property type="evidence" value="ECO:0000315"/>
    <property type="project" value="MGI"/>
</dbReference>
<dbReference type="GO" id="GO:0097746">
    <property type="term" value="P:blood vessel diameter maintenance"/>
    <property type="evidence" value="ECO:0000315"/>
    <property type="project" value="MGI"/>
</dbReference>
<dbReference type="GO" id="GO:0086054">
    <property type="term" value="P:bundle of His cell to Purkinje myocyte communication by electrical coupling"/>
    <property type="evidence" value="ECO:0000315"/>
    <property type="project" value="BHF-UCL"/>
</dbReference>
<dbReference type="GO" id="GO:0061337">
    <property type="term" value="P:cardiac conduction"/>
    <property type="evidence" value="ECO:0000315"/>
    <property type="project" value="MGI"/>
</dbReference>
<dbReference type="GO" id="GO:0003161">
    <property type="term" value="P:cardiac conduction system development"/>
    <property type="evidence" value="ECO:0000315"/>
    <property type="project" value="MGI"/>
</dbReference>
<dbReference type="GO" id="GO:0010643">
    <property type="term" value="P:cell communication by chemical coupling"/>
    <property type="evidence" value="ECO:0007669"/>
    <property type="project" value="Ensembl"/>
</dbReference>
<dbReference type="GO" id="GO:0086064">
    <property type="term" value="P:cell communication by electrical coupling involved in cardiac conduction"/>
    <property type="evidence" value="ECO:0000315"/>
    <property type="project" value="MGI"/>
</dbReference>
<dbReference type="GO" id="GO:0086065">
    <property type="term" value="P:cell communication involved in cardiac conduction"/>
    <property type="evidence" value="ECO:0000315"/>
    <property type="project" value="MGI"/>
</dbReference>
<dbReference type="GO" id="GO:0035050">
    <property type="term" value="P:embryonic heart tube development"/>
    <property type="evidence" value="ECO:0000315"/>
    <property type="project" value="MGI"/>
</dbReference>
<dbReference type="GO" id="GO:0030326">
    <property type="term" value="P:embryonic limb morphogenesis"/>
    <property type="evidence" value="ECO:0000315"/>
    <property type="project" value="MGI"/>
</dbReference>
<dbReference type="GO" id="GO:0003158">
    <property type="term" value="P:endothelium development"/>
    <property type="evidence" value="ECO:0007669"/>
    <property type="project" value="Ensembl"/>
</dbReference>
<dbReference type="GO" id="GO:0035922">
    <property type="term" value="P:foramen ovale closure"/>
    <property type="evidence" value="ECO:0000315"/>
    <property type="project" value="MGI"/>
</dbReference>
<dbReference type="GO" id="GO:0016264">
    <property type="term" value="P:gap junction assembly"/>
    <property type="evidence" value="ECO:0007669"/>
    <property type="project" value="Ensembl"/>
</dbReference>
<dbReference type="GO" id="GO:0003174">
    <property type="term" value="P:mitral valve development"/>
    <property type="evidence" value="ECO:0007669"/>
    <property type="project" value="Ensembl"/>
</dbReference>
<dbReference type="GO" id="GO:0045776">
    <property type="term" value="P:negative regulation of blood pressure"/>
    <property type="evidence" value="ECO:0007669"/>
    <property type="project" value="Ensembl"/>
</dbReference>
<dbReference type="GO" id="GO:0003105">
    <property type="term" value="P:negative regulation of glomerular filtration"/>
    <property type="evidence" value="ECO:0007669"/>
    <property type="project" value="Ensembl"/>
</dbReference>
<dbReference type="GO" id="GO:0003151">
    <property type="term" value="P:outflow tract morphogenesis"/>
    <property type="evidence" value="ECO:0007669"/>
    <property type="project" value="Ensembl"/>
</dbReference>
<dbReference type="GO" id="GO:0010652">
    <property type="term" value="P:positive regulation of cell communication by chemical coupling"/>
    <property type="evidence" value="ECO:0007669"/>
    <property type="project" value="Ensembl"/>
</dbReference>
<dbReference type="GO" id="GO:0045907">
    <property type="term" value="P:positive regulation of vasoconstriction"/>
    <property type="evidence" value="ECO:0007669"/>
    <property type="project" value="Ensembl"/>
</dbReference>
<dbReference type="GO" id="GO:0006813">
    <property type="term" value="P:potassium ion transport"/>
    <property type="evidence" value="ECO:0007669"/>
    <property type="project" value="Ensembl"/>
</dbReference>
<dbReference type="GO" id="GO:0003193">
    <property type="term" value="P:pulmonary valve formation"/>
    <property type="evidence" value="ECO:0007669"/>
    <property type="project" value="Ensembl"/>
</dbReference>
<dbReference type="GO" id="GO:0098910">
    <property type="term" value="P:regulation of atrial cardiac muscle cell action potential"/>
    <property type="evidence" value="ECO:0007669"/>
    <property type="project" value="Ensembl"/>
</dbReference>
<dbReference type="GO" id="GO:0060371">
    <property type="term" value="P:regulation of atrial cardiac muscle cell membrane depolarization"/>
    <property type="evidence" value="ECO:0000315"/>
    <property type="project" value="MGI"/>
</dbReference>
<dbReference type="GO" id="GO:0098904">
    <property type="term" value="P:regulation of AV node cell action potential"/>
    <property type="evidence" value="ECO:0000315"/>
    <property type="project" value="BHF-UCL"/>
</dbReference>
<dbReference type="GO" id="GO:0098905">
    <property type="term" value="P:regulation of bundle of His cell action potential"/>
    <property type="evidence" value="ECO:0000315"/>
    <property type="project" value="BHF-UCL"/>
</dbReference>
<dbReference type="GO" id="GO:0010649">
    <property type="term" value="P:regulation of cell communication by electrical coupling"/>
    <property type="evidence" value="ECO:0007669"/>
    <property type="project" value="Ensembl"/>
</dbReference>
<dbReference type="GO" id="GO:0086091">
    <property type="term" value="P:regulation of heart rate by cardiac conduction"/>
    <property type="evidence" value="ECO:0000315"/>
    <property type="project" value="MGI"/>
</dbReference>
<dbReference type="GO" id="GO:1900825">
    <property type="term" value="P:regulation of membrane depolarization during cardiac muscle cell action potential"/>
    <property type="evidence" value="ECO:0000315"/>
    <property type="project" value="MGI"/>
</dbReference>
<dbReference type="GO" id="GO:0098906">
    <property type="term" value="P:regulation of Purkinje myocyte action potential"/>
    <property type="evidence" value="ECO:0007669"/>
    <property type="project" value="Ensembl"/>
</dbReference>
<dbReference type="GO" id="GO:1900133">
    <property type="term" value="P:regulation of renin secretion into blood stream"/>
    <property type="evidence" value="ECO:0000315"/>
    <property type="project" value="MGI"/>
</dbReference>
<dbReference type="GO" id="GO:0003073">
    <property type="term" value="P:regulation of systemic arterial blood pressure"/>
    <property type="evidence" value="ECO:0000315"/>
    <property type="project" value="MGI"/>
</dbReference>
<dbReference type="GO" id="GO:0060373">
    <property type="term" value="P:regulation of ventricular cardiac muscle cell membrane depolarization"/>
    <property type="evidence" value="ECO:0000315"/>
    <property type="project" value="BHF-UCL"/>
</dbReference>
<dbReference type="GO" id="GO:0060307">
    <property type="term" value="P:regulation of ventricular cardiac muscle cell membrane repolarization"/>
    <property type="evidence" value="ECO:0000315"/>
    <property type="project" value="BHF-UCL"/>
</dbReference>
<dbReference type="GO" id="GO:0003071">
    <property type="term" value="P:renal system process involved in regulation of systemic arterial blood pressure"/>
    <property type="evidence" value="ECO:0000315"/>
    <property type="project" value="MGI"/>
</dbReference>
<dbReference type="GO" id="GO:0086015">
    <property type="term" value="P:SA node cell action potential"/>
    <property type="evidence" value="ECO:0000315"/>
    <property type="project" value="MGI"/>
</dbReference>
<dbReference type="GO" id="GO:0003284">
    <property type="term" value="P:septum primum development"/>
    <property type="evidence" value="ECO:0000315"/>
    <property type="project" value="MGI"/>
</dbReference>
<dbReference type="GO" id="GO:0001501">
    <property type="term" value="P:skeletal system development"/>
    <property type="evidence" value="ECO:0000315"/>
    <property type="project" value="MGI"/>
</dbReference>
<dbReference type="GO" id="GO:0042311">
    <property type="term" value="P:vasodilation"/>
    <property type="evidence" value="ECO:0007669"/>
    <property type="project" value="Ensembl"/>
</dbReference>
<dbReference type="GO" id="GO:1990029">
    <property type="term" value="P:vasomotion"/>
    <property type="evidence" value="ECO:0007669"/>
    <property type="project" value="Ensembl"/>
</dbReference>
<dbReference type="GO" id="GO:0086005">
    <property type="term" value="P:ventricular cardiac muscle cell action potential"/>
    <property type="evidence" value="ECO:0000315"/>
    <property type="project" value="MGI"/>
</dbReference>
<dbReference type="GO" id="GO:0060412">
    <property type="term" value="P:ventricular septum morphogenesis"/>
    <property type="evidence" value="ECO:0000315"/>
    <property type="project" value="MGI"/>
</dbReference>
<dbReference type="DisProt" id="DP00646"/>
<dbReference type="FunFam" id="1.20.1440.80:FF:000001">
    <property type="entry name" value="Gap junction alpha-1"/>
    <property type="match status" value="1"/>
</dbReference>
<dbReference type="Gene3D" id="1.20.1440.80">
    <property type="entry name" value="Gap junction channel protein cysteine-rich domain"/>
    <property type="match status" value="1"/>
</dbReference>
<dbReference type="InterPro" id="IPR000500">
    <property type="entry name" value="Connexin"/>
</dbReference>
<dbReference type="InterPro" id="IPR002264">
    <property type="entry name" value="Connexin40"/>
</dbReference>
<dbReference type="InterPro" id="IPR034634">
    <property type="entry name" value="Connexin_C"/>
</dbReference>
<dbReference type="InterPro" id="IPR019570">
    <property type="entry name" value="Connexin_CCC"/>
</dbReference>
<dbReference type="InterPro" id="IPR017990">
    <property type="entry name" value="Connexin_CS"/>
</dbReference>
<dbReference type="InterPro" id="IPR013092">
    <property type="entry name" value="Connexin_N"/>
</dbReference>
<dbReference type="InterPro" id="IPR038359">
    <property type="entry name" value="Connexin_N_sf"/>
</dbReference>
<dbReference type="InterPro" id="IPR031862">
    <property type="entry name" value="Cx40_C"/>
</dbReference>
<dbReference type="PANTHER" id="PTHR11984">
    <property type="entry name" value="CONNEXIN"/>
    <property type="match status" value="1"/>
</dbReference>
<dbReference type="PANTHER" id="PTHR11984:SF13">
    <property type="entry name" value="GAP JUNCTION ALPHA-5 PROTEIN"/>
    <property type="match status" value="1"/>
</dbReference>
<dbReference type="Pfam" id="PF00029">
    <property type="entry name" value="Connexin"/>
    <property type="match status" value="1"/>
</dbReference>
<dbReference type="Pfam" id="PF16791">
    <property type="entry name" value="Connexin40_C"/>
    <property type="match status" value="1"/>
</dbReference>
<dbReference type="PRINTS" id="PR00206">
    <property type="entry name" value="CONNEXIN"/>
</dbReference>
<dbReference type="PRINTS" id="PR01135">
    <property type="entry name" value="CONNEXINA5"/>
</dbReference>
<dbReference type="SMART" id="SM00037">
    <property type="entry name" value="CNX"/>
    <property type="match status" value="1"/>
</dbReference>
<dbReference type="SMART" id="SM01089">
    <property type="entry name" value="Connexin_CCC"/>
    <property type="match status" value="1"/>
</dbReference>
<dbReference type="SUPFAM" id="SSF118220">
    <property type="entry name" value="Connexin43"/>
    <property type="match status" value="1"/>
</dbReference>
<dbReference type="PROSITE" id="PS00407">
    <property type="entry name" value="CONNEXINS_1"/>
    <property type="match status" value="1"/>
</dbReference>
<dbReference type="PROSITE" id="PS00408">
    <property type="entry name" value="CONNEXINS_2"/>
    <property type="match status" value="1"/>
</dbReference>
<sequence length="358" mass="40413">MGDWSFLGEFLEEVHKHSTVIGKVWLTVLFIFRMLVLGTAAESSWGDEQADFRCDTIQPGCQNVCYDQAFPISHIRYWVLQIIFVSTPSLVYMGHAMHTVRMQEKQKLRDAEKAKEAHRTGAYEYPVAEKAELSCWKEVDGKIVLQGTLLNTYVCTILIRTTMEVAFIVGQYLLYGIFLDTLHVCRRSPCPHPVNCYVSRPTEKNVFIVFMMAVAGLSLFLSLAELYHLGWKKIRQRFGKSRQGVDKHQLPGPPTSLVQSLTPPPDFNQCLKNSSGEKFFSDFSNNMGSRKNPDALATGEVPNQEQIPGEGFIHMHYSQKPEYASGASAGHRLPQGYHSDKRRLSKASSKARSDDLSV</sequence>
<protein>
    <recommendedName>
        <fullName>Gap junction alpha-5 protein</fullName>
    </recommendedName>
    <alternativeName>
        <fullName>Connexin-40</fullName>
        <shortName>Cx40</shortName>
    </alternativeName>
</protein>
<name>CXA5_MOUSE</name>